<dbReference type="EMBL" id="CP000110">
    <property type="protein sequence ID" value="ABB34146.1"/>
    <property type="molecule type" value="Genomic_DNA"/>
</dbReference>
<dbReference type="RefSeq" id="WP_011363386.1">
    <property type="nucleotide sequence ID" value="NC_007516.1"/>
</dbReference>
<dbReference type="SMR" id="Q3AMN6"/>
<dbReference type="STRING" id="110662.Syncc9605_0370"/>
<dbReference type="KEGG" id="syd:Syncc9605_0370"/>
<dbReference type="eggNOG" id="COG0092">
    <property type="taxonomic scope" value="Bacteria"/>
</dbReference>
<dbReference type="HOGENOM" id="CLU_058591_0_2_3"/>
<dbReference type="OrthoDB" id="9806396at2"/>
<dbReference type="GO" id="GO:0022627">
    <property type="term" value="C:cytosolic small ribosomal subunit"/>
    <property type="evidence" value="ECO:0007669"/>
    <property type="project" value="TreeGrafter"/>
</dbReference>
<dbReference type="GO" id="GO:0003729">
    <property type="term" value="F:mRNA binding"/>
    <property type="evidence" value="ECO:0007669"/>
    <property type="project" value="UniProtKB-UniRule"/>
</dbReference>
<dbReference type="GO" id="GO:0019843">
    <property type="term" value="F:rRNA binding"/>
    <property type="evidence" value="ECO:0007669"/>
    <property type="project" value="UniProtKB-UniRule"/>
</dbReference>
<dbReference type="GO" id="GO:0003735">
    <property type="term" value="F:structural constituent of ribosome"/>
    <property type="evidence" value="ECO:0007669"/>
    <property type="project" value="InterPro"/>
</dbReference>
<dbReference type="GO" id="GO:0006412">
    <property type="term" value="P:translation"/>
    <property type="evidence" value="ECO:0007669"/>
    <property type="project" value="UniProtKB-UniRule"/>
</dbReference>
<dbReference type="CDD" id="cd02412">
    <property type="entry name" value="KH-II_30S_S3"/>
    <property type="match status" value="1"/>
</dbReference>
<dbReference type="FunFam" id="3.30.300.20:FF:000001">
    <property type="entry name" value="30S ribosomal protein S3"/>
    <property type="match status" value="1"/>
</dbReference>
<dbReference type="Gene3D" id="3.30.300.20">
    <property type="match status" value="1"/>
</dbReference>
<dbReference type="Gene3D" id="3.30.1140.32">
    <property type="entry name" value="Ribosomal protein S3, C-terminal domain"/>
    <property type="match status" value="1"/>
</dbReference>
<dbReference type="HAMAP" id="MF_01309_B">
    <property type="entry name" value="Ribosomal_uS3_B"/>
    <property type="match status" value="1"/>
</dbReference>
<dbReference type="InterPro" id="IPR004087">
    <property type="entry name" value="KH_dom"/>
</dbReference>
<dbReference type="InterPro" id="IPR015946">
    <property type="entry name" value="KH_dom-like_a/b"/>
</dbReference>
<dbReference type="InterPro" id="IPR004044">
    <property type="entry name" value="KH_dom_type_2"/>
</dbReference>
<dbReference type="InterPro" id="IPR009019">
    <property type="entry name" value="KH_sf_prok-type"/>
</dbReference>
<dbReference type="InterPro" id="IPR036419">
    <property type="entry name" value="Ribosomal_S3_C_sf"/>
</dbReference>
<dbReference type="InterPro" id="IPR005704">
    <property type="entry name" value="Ribosomal_uS3_bac-typ"/>
</dbReference>
<dbReference type="InterPro" id="IPR001351">
    <property type="entry name" value="Ribosomal_uS3_C"/>
</dbReference>
<dbReference type="InterPro" id="IPR018280">
    <property type="entry name" value="Ribosomal_uS3_CS"/>
</dbReference>
<dbReference type="NCBIfam" id="TIGR01009">
    <property type="entry name" value="rpsC_bact"/>
    <property type="match status" value="1"/>
</dbReference>
<dbReference type="PANTHER" id="PTHR11760">
    <property type="entry name" value="30S/40S RIBOSOMAL PROTEIN S3"/>
    <property type="match status" value="1"/>
</dbReference>
<dbReference type="PANTHER" id="PTHR11760:SF19">
    <property type="entry name" value="SMALL RIBOSOMAL SUBUNIT PROTEIN US3C"/>
    <property type="match status" value="1"/>
</dbReference>
<dbReference type="Pfam" id="PF07650">
    <property type="entry name" value="KH_2"/>
    <property type="match status" value="1"/>
</dbReference>
<dbReference type="Pfam" id="PF00189">
    <property type="entry name" value="Ribosomal_S3_C"/>
    <property type="match status" value="1"/>
</dbReference>
<dbReference type="SMART" id="SM00322">
    <property type="entry name" value="KH"/>
    <property type="match status" value="1"/>
</dbReference>
<dbReference type="SUPFAM" id="SSF54814">
    <property type="entry name" value="Prokaryotic type KH domain (KH-domain type II)"/>
    <property type="match status" value="1"/>
</dbReference>
<dbReference type="SUPFAM" id="SSF54821">
    <property type="entry name" value="Ribosomal protein S3 C-terminal domain"/>
    <property type="match status" value="1"/>
</dbReference>
<dbReference type="PROSITE" id="PS50823">
    <property type="entry name" value="KH_TYPE_2"/>
    <property type="match status" value="1"/>
</dbReference>
<dbReference type="PROSITE" id="PS00548">
    <property type="entry name" value="RIBOSOMAL_S3"/>
    <property type="match status" value="1"/>
</dbReference>
<comment type="function">
    <text evidence="1">Binds the lower part of the 30S subunit head. Binds mRNA in the 70S ribosome, positioning it for translation.</text>
</comment>
<comment type="subunit">
    <text evidence="1">Part of the 30S ribosomal subunit. Forms a tight complex with proteins S10 and S14.</text>
</comment>
<comment type="similarity">
    <text evidence="1">Belongs to the universal ribosomal protein uS3 family.</text>
</comment>
<proteinExistence type="inferred from homology"/>
<feature type="chain" id="PRO_0000293904" description="Small ribosomal subunit protein uS3">
    <location>
        <begin position="1"/>
        <end position="242"/>
    </location>
</feature>
<feature type="domain" description="KH type-2" evidence="1">
    <location>
        <begin position="39"/>
        <end position="110"/>
    </location>
</feature>
<feature type="region of interest" description="Disordered" evidence="2">
    <location>
        <begin position="216"/>
        <end position="242"/>
    </location>
</feature>
<feature type="compositionally biased region" description="Basic and acidic residues" evidence="2">
    <location>
        <begin position="233"/>
        <end position="242"/>
    </location>
</feature>
<keyword id="KW-0687">Ribonucleoprotein</keyword>
<keyword id="KW-0689">Ribosomal protein</keyword>
<keyword id="KW-0694">RNA-binding</keyword>
<keyword id="KW-0699">rRNA-binding</keyword>
<protein>
    <recommendedName>
        <fullName evidence="1">Small ribosomal subunit protein uS3</fullName>
    </recommendedName>
    <alternativeName>
        <fullName evidence="3">30S ribosomal protein S3</fullName>
    </alternativeName>
</protein>
<evidence type="ECO:0000255" key="1">
    <source>
        <dbReference type="HAMAP-Rule" id="MF_01309"/>
    </source>
</evidence>
<evidence type="ECO:0000256" key="2">
    <source>
        <dbReference type="SAM" id="MobiDB-lite"/>
    </source>
</evidence>
<evidence type="ECO:0000305" key="3"/>
<reference key="1">
    <citation type="submission" date="2005-07" db="EMBL/GenBank/DDBJ databases">
        <title>Complete sequence of Synechococcus sp. CC9605.</title>
        <authorList>
            <consortium name="US DOE Joint Genome Institute"/>
            <person name="Copeland A."/>
            <person name="Lucas S."/>
            <person name="Lapidus A."/>
            <person name="Barry K."/>
            <person name="Detter J.C."/>
            <person name="Glavina T."/>
            <person name="Hammon N."/>
            <person name="Israni S."/>
            <person name="Pitluck S."/>
            <person name="Schmutz J."/>
            <person name="Martinez M."/>
            <person name="Larimer F."/>
            <person name="Land M."/>
            <person name="Kyrpides N."/>
            <person name="Ivanova N."/>
            <person name="Richardson P."/>
        </authorList>
    </citation>
    <scope>NUCLEOTIDE SEQUENCE [LARGE SCALE GENOMIC DNA]</scope>
    <source>
        <strain>CC9605</strain>
    </source>
</reference>
<organism>
    <name type="scientific">Synechococcus sp. (strain CC9605)</name>
    <dbReference type="NCBI Taxonomy" id="110662"/>
    <lineage>
        <taxon>Bacteria</taxon>
        <taxon>Bacillati</taxon>
        <taxon>Cyanobacteriota</taxon>
        <taxon>Cyanophyceae</taxon>
        <taxon>Synechococcales</taxon>
        <taxon>Synechococcaceae</taxon>
        <taxon>Synechococcus</taxon>
    </lineage>
</organism>
<gene>
    <name evidence="1" type="primary">rpsC</name>
    <name evidence="1" type="synonym">rps3</name>
    <name type="ordered locus">Syncc9605_0370</name>
</gene>
<sequence length="242" mass="27138">MGHKINPTGLRLGITQEHRSRWYASSKNYPALLQEDDRIRKFIHKKYGSAGISDVLIARKADQLEVELKTARPGVLVGRQGSGIEELRSGIQKTIGDSSRQVRINVVEVERVDGDAFLLAEYIAQQLEKRVAFRRTIRMAVQRAQRAGVLGLKIQVSGRLNGAEIARTEWTREGRVPLHTLRADIDYATKVASTTYGVLGIKVWVFKGEVLSEQAQPMPVGAAPRRRASRRPQQFEDRSNEG</sequence>
<accession>Q3AMN6</accession>
<name>RS3_SYNSC</name>